<evidence type="ECO:0000250" key="1"/>
<evidence type="ECO:0000255" key="2">
    <source>
        <dbReference type="PROSITE-ProRule" id="PRU10096"/>
    </source>
</evidence>
<evidence type="ECO:0000269" key="3">
    <source>
    </source>
</evidence>
<evidence type="ECO:0000269" key="4">
    <source>
    </source>
</evidence>
<evidence type="ECO:0000269" key="5">
    <source>
    </source>
</evidence>
<evidence type="ECO:0000305" key="6"/>
<name>STE23_YEAST</name>
<proteinExistence type="evidence at protein level"/>
<sequence length="1027" mass="117579">MGVSLLASSSAFVTKPLLTQLVHLSPISLNFTVRRFKPFTCLSRYYTTNPYNMTSNFKTFNLDFLKPDLDERSYRFIELPNKLKALLIQDPKADKAAASLDVNIGAFEDPKNLPGLAHFCEHLLFMGSEKFPDENEYSSYLSKHGGSSNAYTASQNTNYFFEVNHQHLFGALDRFSGFFSCPLFNKDSTDKEINAVNSENKKNLQNDIWRIYQLDKSLTNTKHPYHKFSTGNIETLGTLPKENGLNVRDELLKFHKNFYSANLMKLCILGREDLDTLSDWTYDLFKDVANNGREVPLYAEPIMQPEHLQKIIQVRPVKDLKKLEISFTVPDMEEHWESKPPRILSHLIGHEGSGSLLAHLKKLGWANELSAGGHTVSKGNAFFAVDIDLTDNGLTHYRDVIVLIFQYIEMLKNSLPQKWIFNELQDISNATFKFKQAGSPSSTVSSLAKCLEKDYIPVSRILAMGLLTKYEPDLLTQYTDALVPENSRVTLISRSLETDSAEKWYGTAYKVVDYPADLIKNMKSPGLNPALTLPRPNEFVSTNFKVDKIDGIKPLDEPVLLLSDDVSKLWYKKDDRFWQPRGYIYLSFKLPHTHASIINSMLSTLYTQLANDALKDVQYDAACADLRISFNKTNQGLAITASGFNEKLIILLTRFLQGVNSFEPKKDRFEILKDKTIRHLKNLLYEVPYSQMSNYYNAIINERSWSTAEKLQVFEKLTFEQLINFIPTIYEGVYFETLIHGNIKHEEALEVDSLIKSLIPNNIHNLQVSNNRLRSYLLPKGKTFRYETALKDSQNVNSCIQHVTQLDVYSEDLSALSGLFAQLIHEPCFDTLRTKEQLGYVVFSSSLNNHGTANIRILIQSEHTTPYLEWRINNFYETFGQVLRDMPEEDFEKHKEALCNSLLQKFKNMAEESARYTAAIYLGDYNFTHRQKKAKLVANITKQQMIDFYENYIMSENASKLILHLKSQVENKELNENELDTAKYPTGQLIEDVGAFKSTLFVAPVRQPMKDFEISAPPKLNNSSESE</sequence>
<feature type="chain" id="PRO_0000074418" description="A-factor-processing enzyme">
    <location>
        <begin position="1"/>
        <end position="1027"/>
    </location>
</feature>
<feature type="active site" description="Proton acceptor" evidence="2">
    <location>
        <position position="121"/>
    </location>
</feature>
<feature type="binding site" evidence="2">
    <location>
        <position position="118"/>
    </location>
    <ligand>
        <name>Zn(2+)</name>
        <dbReference type="ChEBI" id="CHEBI:29105"/>
    </ligand>
</feature>
<feature type="binding site" evidence="2">
    <location>
        <position position="122"/>
    </location>
    <ligand>
        <name>Zn(2+)</name>
        <dbReference type="ChEBI" id="CHEBI:29105"/>
    </ligand>
</feature>
<feature type="binding site" evidence="2">
    <location>
        <position position="199"/>
    </location>
    <ligand>
        <name>Zn(2+)</name>
        <dbReference type="ChEBI" id="CHEBI:29105"/>
    </ligand>
</feature>
<gene>
    <name type="primary">STE23</name>
    <name type="ordered locus">YLR389C</name>
    <name type="ORF">L8084.12</name>
</gene>
<accession>Q06010</accession>
<accession>D6VZ24</accession>
<accession>E9P8R3</accession>
<protein>
    <recommendedName>
        <fullName>A-factor-processing enzyme</fullName>
        <ecNumber>3.4.24.-</ecNumber>
    </recommendedName>
    <alternativeName>
        <fullName>Insulin-degrading enzyme homolog</fullName>
    </alternativeName>
</protein>
<reference key="1">
    <citation type="journal article" date="1997" name="Nature">
        <title>The nucleotide sequence of Saccharomyces cerevisiae chromosome XII.</title>
        <authorList>
            <person name="Johnston M."/>
            <person name="Hillier L.W."/>
            <person name="Riles L."/>
            <person name="Albermann K."/>
            <person name="Andre B."/>
            <person name="Ansorge W."/>
            <person name="Benes V."/>
            <person name="Brueckner M."/>
            <person name="Delius H."/>
            <person name="Dubois E."/>
            <person name="Duesterhoeft A."/>
            <person name="Entian K.-D."/>
            <person name="Floeth M."/>
            <person name="Goffeau A."/>
            <person name="Hebling U."/>
            <person name="Heumann K."/>
            <person name="Heuss-Neitzel D."/>
            <person name="Hilbert H."/>
            <person name="Hilger F."/>
            <person name="Kleine K."/>
            <person name="Koetter P."/>
            <person name="Louis E.J."/>
            <person name="Messenguy F."/>
            <person name="Mewes H.-W."/>
            <person name="Miosga T."/>
            <person name="Moestl D."/>
            <person name="Mueller-Auer S."/>
            <person name="Nentwich U."/>
            <person name="Obermaier B."/>
            <person name="Piravandi E."/>
            <person name="Pohl T.M."/>
            <person name="Portetelle D."/>
            <person name="Purnelle B."/>
            <person name="Rechmann S."/>
            <person name="Rieger M."/>
            <person name="Rinke M."/>
            <person name="Rose M."/>
            <person name="Scharfe M."/>
            <person name="Scherens B."/>
            <person name="Scholler P."/>
            <person name="Schwager C."/>
            <person name="Schwarz S."/>
            <person name="Underwood A.P."/>
            <person name="Urrestarazu L.A."/>
            <person name="Vandenbol M."/>
            <person name="Verhasselt P."/>
            <person name="Vierendeels F."/>
            <person name="Voet M."/>
            <person name="Volckaert G."/>
            <person name="Voss H."/>
            <person name="Wambutt R."/>
            <person name="Wedler E."/>
            <person name="Wedler H."/>
            <person name="Zimmermann F.K."/>
            <person name="Zollner A."/>
            <person name="Hani J."/>
            <person name="Hoheisel J.D."/>
        </authorList>
    </citation>
    <scope>NUCLEOTIDE SEQUENCE [LARGE SCALE GENOMIC DNA]</scope>
    <source>
        <strain>ATCC 204508 / S288c</strain>
    </source>
</reference>
<reference key="2">
    <citation type="submission" date="2004-02" db="EMBL/GenBank/DDBJ databases">
        <authorList>
            <person name="Hong E.L."/>
            <person name="Cherry J.M."/>
        </authorList>
    </citation>
    <scope>SEQUENCE REVISION TO C-TERMINUS</scope>
</reference>
<reference key="3">
    <citation type="journal article" date="2014" name="G3 (Bethesda)">
        <title>The reference genome sequence of Saccharomyces cerevisiae: Then and now.</title>
        <authorList>
            <person name="Engel S.R."/>
            <person name="Dietrich F.S."/>
            <person name="Fisk D.G."/>
            <person name="Binkley G."/>
            <person name="Balakrishnan R."/>
            <person name="Costanzo M.C."/>
            <person name="Dwight S.S."/>
            <person name="Hitz B.C."/>
            <person name="Karra K."/>
            <person name="Nash R.S."/>
            <person name="Weng S."/>
            <person name="Wong E.D."/>
            <person name="Lloyd P."/>
            <person name="Skrzypek M.S."/>
            <person name="Miyasato S.R."/>
            <person name="Simison M."/>
            <person name="Cherry J.M."/>
        </authorList>
    </citation>
    <scope>GENOME REANNOTATION</scope>
    <source>
        <strain>ATCC 204508 / S288c</strain>
    </source>
</reference>
<reference key="4">
    <citation type="journal article" date="2003" name="Genome Biol.">
        <title>Reinvestigation of the Saccharomyces cerevisiae genome annotation by comparison to the genome of a related fungus: Ashbya gossypii.</title>
        <authorList>
            <person name="Brachat S."/>
            <person name="Dietrich F.S."/>
            <person name="Voegeli S."/>
            <person name="Zhang Z."/>
            <person name="Stuart L."/>
            <person name="Lerch A."/>
            <person name="Gates K."/>
            <person name="Gaffney T.D."/>
            <person name="Philippsen P."/>
        </authorList>
    </citation>
    <scope>NUCLEOTIDE SEQUENCE [GENOMIC DNA] OF 943-1027</scope>
    <scope>IDENTIFICATION OF FRAMESHIFT</scope>
    <source>
        <strain>ATCC 204511 / S288c / AB972</strain>
    </source>
</reference>
<reference key="5">
    <citation type="journal article" date="1995" name="Science">
        <title>Role of yeast insulin-degrading enzyme homologs in propheromone processing and bud site selection.</title>
        <authorList>
            <person name="Adames N."/>
            <person name="Blundell K."/>
            <person name="Ashby M.N."/>
            <person name="Boone C."/>
        </authorList>
    </citation>
    <scope>FUNCTION</scope>
</reference>
<reference key="6">
    <citation type="journal article" date="2005" name="J. Biol. Chem.">
        <title>Yeast as a tractable genetic system for functional studies of the insulin-degrading enzyme.</title>
        <authorList>
            <person name="Kim S."/>
            <person name="Lapham A.N."/>
            <person name="Freedman C.G."/>
            <person name="Reed T.L."/>
            <person name="Schmidt W.K."/>
        </authorList>
    </citation>
    <scope>FUNCTION</scope>
    <scope>SUBCELLULAR LOCATION</scope>
</reference>
<reference key="7">
    <citation type="journal article" date="2009" name="Yeast">
        <title>Yeast Ste23p shares functional similarities with mammalian insulin-degrading enzymes.</title>
        <authorList>
            <person name="Alper B.J."/>
            <person name="Rowse J.W."/>
            <person name="Schmidt W.K."/>
        </authorList>
    </citation>
    <scope>FUNCTION</scope>
    <scope>INDUCTION</scope>
    <scope>BIOPHYSICOCHEMICAL PROPERTIES</scope>
    <scope>ACTIVITY REGULATION</scope>
    <scope>IDENTIFICATION OF PROBABLE INITIATION SITE</scope>
</reference>
<dbReference type="EC" id="3.4.24.-"/>
<dbReference type="EMBL" id="U19729">
    <property type="protein sequence ID" value="AAB82351.2"/>
    <property type="molecule type" value="Genomic_DNA"/>
</dbReference>
<dbReference type="EMBL" id="AY260885">
    <property type="protein sequence ID" value="AAP21753.1"/>
    <property type="molecule type" value="Genomic_DNA"/>
</dbReference>
<dbReference type="EMBL" id="BK006945">
    <property type="protein sequence ID" value="DAA09690.1"/>
    <property type="molecule type" value="Genomic_DNA"/>
</dbReference>
<dbReference type="PIR" id="S55945">
    <property type="entry name" value="S55945"/>
</dbReference>
<dbReference type="RefSeq" id="NP_013493.2">
    <property type="nucleotide sequence ID" value="NM_001182278.1"/>
</dbReference>
<dbReference type="SMR" id="Q06010"/>
<dbReference type="BioGRID" id="31648">
    <property type="interactions" value="67"/>
</dbReference>
<dbReference type="DIP" id="DIP-1921N"/>
<dbReference type="FunCoup" id="Q06010">
    <property type="interactions" value="1212"/>
</dbReference>
<dbReference type="IntAct" id="Q06010">
    <property type="interactions" value="7"/>
</dbReference>
<dbReference type="MINT" id="Q06010"/>
<dbReference type="STRING" id="4932.YLR389C"/>
<dbReference type="MEROPS" id="M16.008"/>
<dbReference type="iPTMnet" id="Q06010"/>
<dbReference type="PaxDb" id="4932-YLR389C"/>
<dbReference type="PeptideAtlas" id="Q06010"/>
<dbReference type="TopDownProteomics" id="Q06010"/>
<dbReference type="EnsemblFungi" id="YLR389C_mRNA">
    <property type="protein sequence ID" value="YLR389C"/>
    <property type="gene ID" value="YLR389C"/>
</dbReference>
<dbReference type="GeneID" id="851105"/>
<dbReference type="KEGG" id="sce:YLR389C"/>
<dbReference type="AGR" id="SGD:S000004381"/>
<dbReference type="SGD" id="S000004381">
    <property type="gene designation" value="STE23"/>
</dbReference>
<dbReference type="VEuPathDB" id="FungiDB:YLR389C"/>
<dbReference type="eggNOG" id="KOG0959">
    <property type="taxonomic scope" value="Eukaryota"/>
</dbReference>
<dbReference type="GeneTree" id="ENSGT00940000155780"/>
<dbReference type="HOGENOM" id="CLU_004639_1_1_1"/>
<dbReference type="InParanoid" id="Q06010"/>
<dbReference type="OMA" id="WIFDEMK"/>
<dbReference type="OrthoDB" id="952271at2759"/>
<dbReference type="BioCyc" id="YEAST:G3O-32455-MONOMER"/>
<dbReference type="Reactome" id="R-SCE-9033241">
    <property type="pathway name" value="Peroxisomal protein import"/>
</dbReference>
<dbReference type="BioGRID-ORCS" id="851105">
    <property type="hits" value="0 hits in 10 CRISPR screens"/>
</dbReference>
<dbReference type="CD-CODE" id="E03F929F">
    <property type="entry name" value="Stress granule"/>
</dbReference>
<dbReference type="PRO" id="PR:Q06010"/>
<dbReference type="Proteomes" id="UP000002311">
    <property type="component" value="Chromosome XII"/>
</dbReference>
<dbReference type="RNAct" id="Q06010">
    <property type="molecule type" value="protein"/>
</dbReference>
<dbReference type="GO" id="GO:0005829">
    <property type="term" value="C:cytosol"/>
    <property type="evidence" value="ECO:0000318"/>
    <property type="project" value="GO_Central"/>
</dbReference>
<dbReference type="GO" id="GO:0016020">
    <property type="term" value="C:membrane"/>
    <property type="evidence" value="ECO:0007669"/>
    <property type="project" value="UniProtKB-SubCell"/>
</dbReference>
<dbReference type="GO" id="GO:0005759">
    <property type="term" value="C:mitochondrial matrix"/>
    <property type="evidence" value="ECO:0000314"/>
    <property type="project" value="SGD"/>
</dbReference>
<dbReference type="GO" id="GO:0005739">
    <property type="term" value="C:mitochondrion"/>
    <property type="evidence" value="ECO:0007005"/>
    <property type="project" value="SGD"/>
</dbReference>
<dbReference type="GO" id="GO:0046872">
    <property type="term" value="F:metal ion binding"/>
    <property type="evidence" value="ECO:0007669"/>
    <property type="project" value="UniProtKB-KW"/>
</dbReference>
<dbReference type="GO" id="GO:0004222">
    <property type="term" value="F:metalloendopeptidase activity"/>
    <property type="evidence" value="ECO:0000314"/>
    <property type="project" value="SGD"/>
</dbReference>
<dbReference type="GO" id="GO:0034982">
    <property type="term" value="P:mitochondrial protein processing"/>
    <property type="evidence" value="ECO:0000316"/>
    <property type="project" value="SGD"/>
</dbReference>
<dbReference type="GO" id="GO:0043171">
    <property type="term" value="P:peptide catabolic process"/>
    <property type="evidence" value="ECO:0000318"/>
    <property type="project" value="GO_Central"/>
</dbReference>
<dbReference type="GO" id="GO:0071432">
    <property type="term" value="P:peptide mating pheromone maturation involved in positive regulation of conjugation with cellular fusion"/>
    <property type="evidence" value="ECO:0000316"/>
    <property type="project" value="SGD"/>
</dbReference>
<dbReference type="GO" id="GO:0051603">
    <property type="term" value="P:proteolysis involved in protein catabolic process"/>
    <property type="evidence" value="ECO:0000318"/>
    <property type="project" value="GO_Central"/>
</dbReference>
<dbReference type="GO" id="GO:0019236">
    <property type="term" value="P:response to pheromone"/>
    <property type="evidence" value="ECO:0007669"/>
    <property type="project" value="UniProtKB-KW"/>
</dbReference>
<dbReference type="FunFam" id="3.30.830.10:FF:000003">
    <property type="entry name" value="Insulin-degrading enzyme"/>
    <property type="match status" value="1"/>
</dbReference>
<dbReference type="FunFam" id="3.30.830.10:FF:000030">
    <property type="entry name" value="Insulin-degrading enzyme"/>
    <property type="match status" value="1"/>
</dbReference>
<dbReference type="FunFam" id="3.30.830.10:FF:000005">
    <property type="entry name" value="nardilysin isoform X1"/>
    <property type="match status" value="1"/>
</dbReference>
<dbReference type="FunFam" id="3.30.830.10:FF:000004">
    <property type="entry name" value="Putative insulin-degrading enzyme"/>
    <property type="match status" value="1"/>
</dbReference>
<dbReference type="Gene3D" id="3.30.830.10">
    <property type="entry name" value="Metalloenzyme, LuxS/M16 peptidase-like"/>
    <property type="match status" value="4"/>
</dbReference>
<dbReference type="InterPro" id="IPR011249">
    <property type="entry name" value="Metalloenz_LuxS/M16"/>
</dbReference>
<dbReference type="InterPro" id="IPR011765">
    <property type="entry name" value="Pept_M16_N"/>
</dbReference>
<dbReference type="InterPro" id="IPR001431">
    <property type="entry name" value="Pept_M16_Zn_BS"/>
</dbReference>
<dbReference type="InterPro" id="IPR050626">
    <property type="entry name" value="Peptidase_M16"/>
</dbReference>
<dbReference type="InterPro" id="IPR007863">
    <property type="entry name" value="Peptidase_M16_C"/>
</dbReference>
<dbReference type="InterPro" id="IPR032632">
    <property type="entry name" value="Peptidase_M16_M"/>
</dbReference>
<dbReference type="InterPro" id="IPR054734">
    <property type="entry name" value="PqqF-like_C_4"/>
</dbReference>
<dbReference type="PANTHER" id="PTHR43690:SF18">
    <property type="entry name" value="INSULIN-DEGRADING ENZYME-RELATED"/>
    <property type="match status" value="1"/>
</dbReference>
<dbReference type="PANTHER" id="PTHR43690">
    <property type="entry name" value="NARDILYSIN"/>
    <property type="match status" value="1"/>
</dbReference>
<dbReference type="Pfam" id="PF00675">
    <property type="entry name" value="Peptidase_M16"/>
    <property type="match status" value="1"/>
</dbReference>
<dbReference type="Pfam" id="PF05193">
    <property type="entry name" value="Peptidase_M16_C"/>
    <property type="match status" value="1"/>
</dbReference>
<dbReference type="Pfam" id="PF16187">
    <property type="entry name" value="Peptidase_M16_M"/>
    <property type="match status" value="1"/>
</dbReference>
<dbReference type="Pfam" id="PF22456">
    <property type="entry name" value="PqqF-like_C_4"/>
    <property type="match status" value="1"/>
</dbReference>
<dbReference type="SUPFAM" id="SSF63411">
    <property type="entry name" value="LuxS/MPP-like metallohydrolase"/>
    <property type="match status" value="4"/>
</dbReference>
<dbReference type="PROSITE" id="PS00143">
    <property type="entry name" value="INSULINASE"/>
    <property type="match status" value="1"/>
</dbReference>
<keyword id="KW-0378">Hydrolase</keyword>
<keyword id="KW-0472">Membrane</keyword>
<keyword id="KW-0479">Metal-binding</keyword>
<keyword id="KW-0482">Metalloprotease</keyword>
<keyword id="KW-0589">Pheromone response</keyword>
<keyword id="KW-0645">Protease</keyword>
<keyword id="KW-1185">Reference proteome</keyword>
<keyword id="KW-0862">Zinc</keyword>
<organism>
    <name type="scientific">Saccharomyces cerevisiae (strain ATCC 204508 / S288c)</name>
    <name type="common">Baker's yeast</name>
    <dbReference type="NCBI Taxonomy" id="559292"/>
    <lineage>
        <taxon>Eukaryota</taxon>
        <taxon>Fungi</taxon>
        <taxon>Dikarya</taxon>
        <taxon>Ascomycota</taxon>
        <taxon>Saccharomycotina</taxon>
        <taxon>Saccharomycetes</taxon>
        <taxon>Saccharomycetales</taxon>
        <taxon>Saccharomycetaceae</taxon>
        <taxon>Saccharomyces</taxon>
    </lineage>
</organism>
<comment type="function">
    <text evidence="3 4 5">Involved in the N-terminal endoproteolytic cleavage of the P2 precursor of the a-factor mating pheromone. Capable of proteolysing the established mammalian insulin-degrading enzymes (IDEs) substrates amyloid-beta peptide and insulin B-chain.</text>
</comment>
<comment type="cofactor">
    <cofactor evidence="1">
        <name>Zn(2+)</name>
        <dbReference type="ChEBI" id="CHEBI:29105"/>
    </cofactor>
    <text evidence="1">Binds 1 zinc ion per subunit.</text>
</comment>
<comment type="activity regulation">
    <text evidence="4">Inhibited by chelating agents like EDTA, TPEN and 1,1-phenanthroline, as well as NEM, free cysteine and DTT.</text>
</comment>
<comment type="biophysicochemical properties">
    <kinetics>
        <KM evidence="4">215 uM for a synthetic a-factor analog</KM>
        <Vmax evidence="4">0.49 umol/min/mg enzyme towards a synthetic a-factor analog</Vmax>
    </kinetics>
    <phDependence>
        <text evidence="4">Optimum pH is 8.1.</text>
    </phDependence>
    <temperatureDependence>
        <text evidence="4">Optimum temperature is 37 degrees Celsius.</text>
    </temperatureDependence>
</comment>
<comment type="subcellular location">
    <subcellularLocation>
        <location evidence="3">Membrane</location>
        <topology evidence="3">Peripheral membrane protein</topology>
    </subcellularLocation>
</comment>
<comment type="induction">
    <text evidence="4">Expressed in both haploid and diploid yeast cells.</text>
</comment>
<comment type="similarity">
    <text evidence="6">Belongs to the peptidase M16 family.</text>
</comment>
<comment type="caution">
    <text evidence="6">It is uncertain whether Met-1 or Met-53 is the initiator. Met-53 is probably the physiologically relevant initiator methionine, as Met-1 is dispensable for the expression of functional STE23, whereas Met-53 is not.</text>
</comment>